<proteinExistence type="inferred from homology"/>
<organism>
    <name type="scientific">Shewanella sediminis (strain HAW-EB3)</name>
    <dbReference type="NCBI Taxonomy" id="425104"/>
    <lineage>
        <taxon>Bacteria</taxon>
        <taxon>Pseudomonadati</taxon>
        <taxon>Pseudomonadota</taxon>
        <taxon>Gammaproteobacteria</taxon>
        <taxon>Alteromonadales</taxon>
        <taxon>Shewanellaceae</taxon>
        <taxon>Shewanella</taxon>
    </lineage>
</organism>
<reference key="1">
    <citation type="submission" date="2007-08" db="EMBL/GenBank/DDBJ databases">
        <title>Complete sequence of Shewanella sediminis HAW-EB3.</title>
        <authorList>
            <consortium name="US DOE Joint Genome Institute"/>
            <person name="Copeland A."/>
            <person name="Lucas S."/>
            <person name="Lapidus A."/>
            <person name="Barry K."/>
            <person name="Glavina del Rio T."/>
            <person name="Dalin E."/>
            <person name="Tice H."/>
            <person name="Pitluck S."/>
            <person name="Chertkov O."/>
            <person name="Brettin T."/>
            <person name="Bruce D."/>
            <person name="Detter J.C."/>
            <person name="Han C."/>
            <person name="Schmutz J."/>
            <person name="Larimer F."/>
            <person name="Land M."/>
            <person name="Hauser L."/>
            <person name="Kyrpides N."/>
            <person name="Kim E."/>
            <person name="Zhao J.-S."/>
            <person name="Richardson P."/>
        </authorList>
    </citation>
    <scope>NUCLEOTIDE SEQUENCE [LARGE SCALE GENOMIC DNA]</scope>
    <source>
        <strain>HAW-EB3</strain>
    </source>
</reference>
<name>RS12_SHESH</name>
<comment type="function">
    <text evidence="2">With S4 and S5 plays an important role in translational accuracy.</text>
</comment>
<comment type="function">
    <text evidence="2">Interacts with and stabilizes bases of the 16S rRNA that are involved in tRNA selection in the A site and with the mRNA backbone. Located at the interface of the 30S and 50S subunits, it traverses the body of the 30S subunit contacting proteins on the other side and probably holding the rRNA structure together. The combined cluster of proteins S8, S12 and S17 appears to hold together the shoulder and platform of the 30S subunit.</text>
</comment>
<comment type="subunit">
    <text evidence="2">Part of the 30S ribosomal subunit. Contacts proteins S8 and S17. May interact with IF1 in the 30S initiation complex.</text>
</comment>
<comment type="similarity">
    <text evidence="2">Belongs to the universal ribosomal protein uS12 family.</text>
</comment>
<accession>A8G1F3</accession>
<feature type="chain" id="PRO_1000080417" description="Small ribosomal subunit protein uS12">
    <location>
        <begin position="1"/>
        <end position="124"/>
    </location>
</feature>
<feature type="modified residue" description="3-methylthioaspartic acid" evidence="1">
    <location>
        <position position="89"/>
    </location>
</feature>
<evidence type="ECO:0000250" key="1"/>
<evidence type="ECO:0000255" key="2">
    <source>
        <dbReference type="HAMAP-Rule" id="MF_00403"/>
    </source>
</evidence>
<evidence type="ECO:0000305" key="3"/>
<protein>
    <recommendedName>
        <fullName evidence="2">Small ribosomal subunit protein uS12</fullName>
    </recommendedName>
    <alternativeName>
        <fullName evidence="3">30S ribosomal protein S12</fullName>
    </alternativeName>
</protein>
<keyword id="KW-0488">Methylation</keyword>
<keyword id="KW-1185">Reference proteome</keyword>
<keyword id="KW-0687">Ribonucleoprotein</keyword>
<keyword id="KW-0689">Ribosomal protein</keyword>
<keyword id="KW-0694">RNA-binding</keyword>
<keyword id="KW-0699">rRNA-binding</keyword>
<keyword id="KW-0820">tRNA-binding</keyword>
<sequence length="124" mass="13649">MATVNQLVRKPRAPKVDKTNVPALDACPQKRGVCTRVYTTTPKKPNSALRKVARVRLTNGFEVTSYIGGEGHNLQEHSVILIRGGRVKDLPGVRYHTVRGALDCAGVSERRQGRSKYGAKRPKS</sequence>
<dbReference type="EMBL" id="CP000821">
    <property type="protein sequence ID" value="ABV38926.1"/>
    <property type="molecule type" value="Genomic_DNA"/>
</dbReference>
<dbReference type="RefSeq" id="WP_012144653.1">
    <property type="nucleotide sequence ID" value="NC_009831.1"/>
</dbReference>
<dbReference type="SMR" id="A8G1F3"/>
<dbReference type="STRING" id="425104.Ssed_4322"/>
<dbReference type="KEGG" id="sse:Ssed_4322"/>
<dbReference type="eggNOG" id="COG0048">
    <property type="taxonomic scope" value="Bacteria"/>
</dbReference>
<dbReference type="HOGENOM" id="CLU_104295_1_2_6"/>
<dbReference type="OrthoDB" id="9802366at2"/>
<dbReference type="Proteomes" id="UP000002015">
    <property type="component" value="Chromosome"/>
</dbReference>
<dbReference type="GO" id="GO:0015935">
    <property type="term" value="C:small ribosomal subunit"/>
    <property type="evidence" value="ECO:0007669"/>
    <property type="project" value="InterPro"/>
</dbReference>
<dbReference type="GO" id="GO:0019843">
    <property type="term" value="F:rRNA binding"/>
    <property type="evidence" value="ECO:0007669"/>
    <property type="project" value="UniProtKB-UniRule"/>
</dbReference>
<dbReference type="GO" id="GO:0003735">
    <property type="term" value="F:structural constituent of ribosome"/>
    <property type="evidence" value="ECO:0007669"/>
    <property type="project" value="InterPro"/>
</dbReference>
<dbReference type="GO" id="GO:0000049">
    <property type="term" value="F:tRNA binding"/>
    <property type="evidence" value="ECO:0007669"/>
    <property type="project" value="UniProtKB-UniRule"/>
</dbReference>
<dbReference type="GO" id="GO:0006412">
    <property type="term" value="P:translation"/>
    <property type="evidence" value="ECO:0007669"/>
    <property type="project" value="UniProtKB-UniRule"/>
</dbReference>
<dbReference type="CDD" id="cd03368">
    <property type="entry name" value="Ribosomal_S12"/>
    <property type="match status" value="1"/>
</dbReference>
<dbReference type="FunFam" id="2.40.50.140:FF:000001">
    <property type="entry name" value="30S ribosomal protein S12"/>
    <property type="match status" value="1"/>
</dbReference>
<dbReference type="Gene3D" id="2.40.50.140">
    <property type="entry name" value="Nucleic acid-binding proteins"/>
    <property type="match status" value="1"/>
</dbReference>
<dbReference type="HAMAP" id="MF_00403_B">
    <property type="entry name" value="Ribosomal_uS12_B"/>
    <property type="match status" value="1"/>
</dbReference>
<dbReference type="InterPro" id="IPR012340">
    <property type="entry name" value="NA-bd_OB-fold"/>
</dbReference>
<dbReference type="InterPro" id="IPR006032">
    <property type="entry name" value="Ribosomal_uS12"/>
</dbReference>
<dbReference type="InterPro" id="IPR005679">
    <property type="entry name" value="Ribosomal_uS12_bac"/>
</dbReference>
<dbReference type="NCBIfam" id="TIGR00981">
    <property type="entry name" value="rpsL_bact"/>
    <property type="match status" value="1"/>
</dbReference>
<dbReference type="PANTHER" id="PTHR11652">
    <property type="entry name" value="30S RIBOSOMAL PROTEIN S12 FAMILY MEMBER"/>
    <property type="match status" value="1"/>
</dbReference>
<dbReference type="Pfam" id="PF00164">
    <property type="entry name" value="Ribosom_S12_S23"/>
    <property type="match status" value="1"/>
</dbReference>
<dbReference type="PIRSF" id="PIRSF002133">
    <property type="entry name" value="Ribosomal_S12/S23"/>
    <property type="match status" value="1"/>
</dbReference>
<dbReference type="PRINTS" id="PR01034">
    <property type="entry name" value="RIBOSOMALS12"/>
</dbReference>
<dbReference type="SUPFAM" id="SSF50249">
    <property type="entry name" value="Nucleic acid-binding proteins"/>
    <property type="match status" value="1"/>
</dbReference>
<dbReference type="PROSITE" id="PS00055">
    <property type="entry name" value="RIBOSOMAL_S12"/>
    <property type="match status" value="1"/>
</dbReference>
<gene>
    <name evidence="2" type="primary">rpsL</name>
    <name type="ordered locus">Ssed_4322</name>
</gene>